<organism>
    <name type="scientific">Staphylococcus aureus (strain Mu3 / ATCC 700698)</name>
    <dbReference type="NCBI Taxonomy" id="418127"/>
    <lineage>
        <taxon>Bacteria</taxon>
        <taxon>Bacillati</taxon>
        <taxon>Bacillota</taxon>
        <taxon>Bacilli</taxon>
        <taxon>Bacillales</taxon>
        <taxon>Staphylococcaceae</taxon>
        <taxon>Staphylococcus</taxon>
    </lineage>
</organism>
<sequence>MPKKSVRHIKIREIISNEQIETQDELVKRLNDYDLNVTQATVSRDIKELQLIKVPIPSGQYVYSLPNDRKFHPLEKLGRYLMDSFVNIDGTDNLLVLKTLPGNAQSIGAILDQINWEEVLGTICGDDTCLIICRSKEASDEIKSRIFNLL</sequence>
<gene>
    <name evidence="1" type="primary">argR</name>
    <name type="ordered locus">SAHV_1508</name>
</gene>
<feature type="chain" id="PRO_1000023603" description="Arginine repressor">
    <location>
        <begin position="1"/>
        <end position="150"/>
    </location>
</feature>
<protein>
    <recommendedName>
        <fullName evidence="1">Arginine repressor</fullName>
    </recommendedName>
</protein>
<name>ARGR_STAA1</name>
<accession>A7X2P6</accession>
<evidence type="ECO:0000255" key="1">
    <source>
        <dbReference type="HAMAP-Rule" id="MF_00173"/>
    </source>
</evidence>
<proteinExistence type="inferred from homology"/>
<dbReference type="EMBL" id="AP009324">
    <property type="protein sequence ID" value="BAF78391.1"/>
    <property type="molecule type" value="Genomic_DNA"/>
</dbReference>
<dbReference type="RefSeq" id="WP_001124985.1">
    <property type="nucleotide sequence ID" value="NZ_CTYB01000003.1"/>
</dbReference>
<dbReference type="SMR" id="A7X2P6"/>
<dbReference type="GeneID" id="98345891"/>
<dbReference type="KEGG" id="saw:SAHV_1508"/>
<dbReference type="HOGENOM" id="CLU_097103_3_0_9"/>
<dbReference type="UniPathway" id="UPA00068"/>
<dbReference type="GO" id="GO:0005737">
    <property type="term" value="C:cytoplasm"/>
    <property type="evidence" value="ECO:0007669"/>
    <property type="project" value="UniProtKB-SubCell"/>
</dbReference>
<dbReference type="GO" id="GO:0034618">
    <property type="term" value="F:arginine binding"/>
    <property type="evidence" value="ECO:0007669"/>
    <property type="project" value="InterPro"/>
</dbReference>
<dbReference type="GO" id="GO:0003677">
    <property type="term" value="F:DNA binding"/>
    <property type="evidence" value="ECO:0007669"/>
    <property type="project" value="UniProtKB-KW"/>
</dbReference>
<dbReference type="GO" id="GO:0003700">
    <property type="term" value="F:DNA-binding transcription factor activity"/>
    <property type="evidence" value="ECO:0007669"/>
    <property type="project" value="UniProtKB-UniRule"/>
</dbReference>
<dbReference type="GO" id="GO:0006526">
    <property type="term" value="P:L-arginine biosynthetic process"/>
    <property type="evidence" value="ECO:0007669"/>
    <property type="project" value="UniProtKB-UniPathway"/>
</dbReference>
<dbReference type="GO" id="GO:0051259">
    <property type="term" value="P:protein complex oligomerization"/>
    <property type="evidence" value="ECO:0007669"/>
    <property type="project" value="InterPro"/>
</dbReference>
<dbReference type="GO" id="GO:1900079">
    <property type="term" value="P:regulation of arginine biosynthetic process"/>
    <property type="evidence" value="ECO:0007669"/>
    <property type="project" value="UniProtKB-UniRule"/>
</dbReference>
<dbReference type="Gene3D" id="3.30.1360.40">
    <property type="match status" value="1"/>
</dbReference>
<dbReference type="Gene3D" id="1.10.10.10">
    <property type="entry name" value="Winged helix-like DNA-binding domain superfamily/Winged helix DNA-binding domain"/>
    <property type="match status" value="1"/>
</dbReference>
<dbReference type="HAMAP" id="MF_00173">
    <property type="entry name" value="Arg_repressor"/>
    <property type="match status" value="1"/>
</dbReference>
<dbReference type="InterPro" id="IPR001669">
    <property type="entry name" value="Arg_repress"/>
</dbReference>
<dbReference type="InterPro" id="IPR020899">
    <property type="entry name" value="Arg_repress_C"/>
</dbReference>
<dbReference type="InterPro" id="IPR036251">
    <property type="entry name" value="Arg_repress_C_sf"/>
</dbReference>
<dbReference type="InterPro" id="IPR020900">
    <property type="entry name" value="Arg_repress_DNA-bd"/>
</dbReference>
<dbReference type="InterPro" id="IPR036388">
    <property type="entry name" value="WH-like_DNA-bd_sf"/>
</dbReference>
<dbReference type="InterPro" id="IPR036390">
    <property type="entry name" value="WH_DNA-bd_sf"/>
</dbReference>
<dbReference type="NCBIfam" id="TIGR01529">
    <property type="entry name" value="argR_whole"/>
    <property type="match status" value="1"/>
</dbReference>
<dbReference type="NCBIfam" id="NF003281">
    <property type="entry name" value="PRK04280.1"/>
    <property type="match status" value="1"/>
</dbReference>
<dbReference type="PANTHER" id="PTHR34471">
    <property type="entry name" value="ARGININE REPRESSOR"/>
    <property type="match status" value="1"/>
</dbReference>
<dbReference type="PANTHER" id="PTHR34471:SF1">
    <property type="entry name" value="ARGININE REPRESSOR"/>
    <property type="match status" value="1"/>
</dbReference>
<dbReference type="Pfam" id="PF01316">
    <property type="entry name" value="Arg_repressor"/>
    <property type="match status" value="1"/>
</dbReference>
<dbReference type="Pfam" id="PF02863">
    <property type="entry name" value="Arg_repressor_C"/>
    <property type="match status" value="1"/>
</dbReference>
<dbReference type="PRINTS" id="PR01467">
    <property type="entry name" value="ARGREPRESSOR"/>
</dbReference>
<dbReference type="SUPFAM" id="SSF55252">
    <property type="entry name" value="C-terminal domain of arginine repressor"/>
    <property type="match status" value="1"/>
</dbReference>
<dbReference type="SUPFAM" id="SSF46785">
    <property type="entry name" value="Winged helix' DNA-binding domain"/>
    <property type="match status" value="1"/>
</dbReference>
<keyword id="KW-0028">Amino-acid biosynthesis</keyword>
<keyword id="KW-0055">Arginine biosynthesis</keyword>
<keyword id="KW-0963">Cytoplasm</keyword>
<keyword id="KW-0238">DNA-binding</keyword>
<keyword id="KW-0678">Repressor</keyword>
<keyword id="KW-0804">Transcription</keyword>
<keyword id="KW-0805">Transcription regulation</keyword>
<comment type="function">
    <text evidence="1">Regulates arginine biosynthesis genes.</text>
</comment>
<comment type="pathway">
    <text>Amino-acid biosynthesis; L-arginine biosynthesis [regulation].</text>
</comment>
<comment type="subcellular location">
    <subcellularLocation>
        <location evidence="1">Cytoplasm</location>
    </subcellularLocation>
</comment>
<comment type="similarity">
    <text evidence="1">Belongs to the ArgR family.</text>
</comment>
<reference key="1">
    <citation type="journal article" date="2008" name="Antimicrob. Agents Chemother.">
        <title>Mutated response regulator graR is responsible for phenotypic conversion of Staphylococcus aureus from heterogeneous vancomycin-intermediate resistance to vancomycin-intermediate resistance.</title>
        <authorList>
            <person name="Neoh H.-M."/>
            <person name="Cui L."/>
            <person name="Yuzawa H."/>
            <person name="Takeuchi F."/>
            <person name="Matsuo M."/>
            <person name="Hiramatsu K."/>
        </authorList>
    </citation>
    <scope>NUCLEOTIDE SEQUENCE [LARGE SCALE GENOMIC DNA]</scope>
    <source>
        <strain>Mu3 / ATCC 700698</strain>
    </source>
</reference>